<reference key="1">
    <citation type="journal article" date="1983" name="Nucleic Acids Res.">
        <title>Sequence homologies in the protamine gene family of rainbow trout.</title>
        <authorList>
            <person name="Aiken J.M."/>
            <person name="McKenzie D."/>
            <person name="Zhao H.-Z."/>
            <person name="States J.C."/>
            <person name="Dixon G.H."/>
        </authorList>
    </citation>
    <scope>NUCLEOTIDE SEQUENCE [GENOMIC DNA]</scope>
</reference>
<protein>
    <recommendedName>
        <fullName>Protamine TP16</fullName>
    </recommendedName>
</protein>
<name>PRT16_ONCMY</name>
<evidence type="ECO:0000256" key="1">
    <source>
        <dbReference type="SAM" id="MobiDB-lite"/>
    </source>
</evidence>
<sequence>MPRRRRSSSRPVRRRRRARVSRRRRRRGRRRRR</sequence>
<feature type="initiator methionine" description="Removed">
    <location>
        <position position="1"/>
    </location>
</feature>
<feature type="peptide" id="PRO_0000044840" description="Protamine TP16">
    <location>
        <begin position="2"/>
        <end position="33"/>
    </location>
</feature>
<feature type="region of interest" description="Disordered" evidence="1">
    <location>
        <begin position="1"/>
        <end position="33"/>
    </location>
</feature>
<proteinExistence type="evidence at transcript level"/>
<accession>P08146</accession>
<comment type="function">
    <text>Protamines substitute for histones in the chromatin of sperm during the haploid phase of spermatogenesis. They compact sperm DNA into a highly condensed, stable and inactive complex.</text>
</comment>
<comment type="subcellular location">
    <subcellularLocation>
        <location>Nucleus</location>
    </subcellularLocation>
    <subcellularLocation>
        <location>Chromosome</location>
    </subcellularLocation>
</comment>
<comment type="tissue specificity">
    <text>Testis.</text>
</comment>
<organism>
    <name type="scientific">Oncorhynchus mykiss</name>
    <name type="common">Rainbow trout</name>
    <name type="synonym">Salmo gairdneri</name>
    <dbReference type="NCBI Taxonomy" id="8022"/>
    <lineage>
        <taxon>Eukaryota</taxon>
        <taxon>Metazoa</taxon>
        <taxon>Chordata</taxon>
        <taxon>Craniata</taxon>
        <taxon>Vertebrata</taxon>
        <taxon>Euteleostomi</taxon>
        <taxon>Actinopterygii</taxon>
        <taxon>Neopterygii</taxon>
        <taxon>Teleostei</taxon>
        <taxon>Protacanthopterygii</taxon>
        <taxon>Salmoniformes</taxon>
        <taxon>Salmonidae</taxon>
        <taxon>Salmoninae</taxon>
        <taxon>Oncorhynchus</taxon>
    </lineage>
</organism>
<keyword id="KW-0158">Chromosome</keyword>
<keyword id="KW-0217">Developmental protein</keyword>
<keyword id="KW-0221">Differentiation</keyword>
<keyword id="KW-0226">DNA condensation</keyword>
<keyword id="KW-0238">DNA-binding</keyword>
<keyword id="KW-0544">Nucleosome core</keyword>
<keyword id="KW-0539">Nucleus</keyword>
<keyword id="KW-0744">Spermatogenesis</keyword>
<dbReference type="EMBL" id="X01597">
    <property type="protein sequence ID" value="CAA25750.1"/>
    <property type="molecule type" value="Genomic_DNA"/>
</dbReference>
<dbReference type="PIR" id="C21211">
    <property type="entry name" value="C21211"/>
</dbReference>
<dbReference type="Proteomes" id="UP000694395">
    <property type="component" value="Unplaced"/>
</dbReference>
<dbReference type="GO" id="GO:0000786">
    <property type="term" value="C:nucleosome"/>
    <property type="evidence" value="ECO:0007669"/>
    <property type="project" value="UniProtKB-KW"/>
</dbReference>
<dbReference type="GO" id="GO:0005634">
    <property type="term" value="C:nucleus"/>
    <property type="evidence" value="ECO:0007669"/>
    <property type="project" value="UniProtKB-SubCell"/>
</dbReference>
<dbReference type="GO" id="GO:0003677">
    <property type="term" value="F:DNA binding"/>
    <property type="evidence" value="ECO:0007669"/>
    <property type="project" value="UniProtKB-KW"/>
</dbReference>
<dbReference type="GO" id="GO:0030154">
    <property type="term" value="P:cell differentiation"/>
    <property type="evidence" value="ECO:0007669"/>
    <property type="project" value="UniProtKB-KW"/>
</dbReference>
<dbReference type="GO" id="GO:0030261">
    <property type="term" value="P:chromosome condensation"/>
    <property type="evidence" value="ECO:0007669"/>
    <property type="project" value="UniProtKB-KW"/>
</dbReference>
<dbReference type="GO" id="GO:0007283">
    <property type="term" value="P:spermatogenesis"/>
    <property type="evidence" value="ECO:0007669"/>
    <property type="project" value="UniProtKB-KW"/>
</dbReference>